<reference key="1">
    <citation type="journal article" date="2005" name="Nat. Biotechnol.">
        <title>Complete genome sequence of the plant commensal Pseudomonas fluorescens Pf-5.</title>
        <authorList>
            <person name="Paulsen I.T."/>
            <person name="Press C.M."/>
            <person name="Ravel J."/>
            <person name="Kobayashi D.Y."/>
            <person name="Myers G.S.A."/>
            <person name="Mavrodi D.V."/>
            <person name="DeBoy R.T."/>
            <person name="Seshadri R."/>
            <person name="Ren Q."/>
            <person name="Madupu R."/>
            <person name="Dodson R.J."/>
            <person name="Durkin A.S."/>
            <person name="Brinkac L.M."/>
            <person name="Daugherty S.C."/>
            <person name="Sullivan S.A."/>
            <person name="Rosovitz M.J."/>
            <person name="Gwinn M.L."/>
            <person name="Zhou L."/>
            <person name="Schneider D.J."/>
            <person name="Cartinhour S.W."/>
            <person name="Nelson W.C."/>
            <person name="Weidman J."/>
            <person name="Watkins K."/>
            <person name="Tran K."/>
            <person name="Khouri H."/>
            <person name="Pierson E.A."/>
            <person name="Pierson L.S. III"/>
            <person name="Thomashow L.S."/>
            <person name="Loper J.E."/>
        </authorList>
    </citation>
    <scope>NUCLEOTIDE SEQUENCE [LARGE SCALE GENOMIC DNA]</scope>
    <source>
        <strain>ATCC BAA-477 / NRRL B-23932 / Pf-5</strain>
    </source>
</reference>
<proteinExistence type="inferred from homology"/>
<organism>
    <name type="scientific">Pseudomonas fluorescens (strain ATCC BAA-477 / NRRL B-23932 / Pf-5)</name>
    <dbReference type="NCBI Taxonomy" id="220664"/>
    <lineage>
        <taxon>Bacteria</taxon>
        <taxon>Pseudomonadati</taxon>
        <taxon>Pseudomonadota</taxon>
        <taxon>Gammaproteobacteria</taxon>
        <taxon>Pseudomonadales</taxon>
        <taxon>Pseudomonadaceae</taxon>
        <taxon>Pseudomonas</taxon>
    </lineage>
</organism>
<accession>Q4K8U2</accession>
<protein>
    <recommendedName>
        <fullName evidence="1">Thiopurine S-methyltransferase</fullName>
        <ecNumber evidence="1">2.1.1.67</ecNumber>
    </recommendedName>
    <alternativeName>
        <fullName evidence="1">Thiopurine methyltransferase</fullName>
    </alternativeName>
</protein>
<dbReference type="EC" id="2.1.1.67" evidence="1"/>
<dbReference type="EMBL" id="CP000076">
    <property type="protein sequence ID" value="AAY93505.1"/>
    <property type="molecule type" value="Genomic_DNA"/>
</dbReference>
<dbReference type="RefSeq" id="WP_011062523.1">
    <property type="nucleotide sequence ID" value="NC_004129.6"/>
</dbReference>
<dbReference type="SMR" id="Q4K8U2"/>
<dbReference type="STRING" id="220664.PFL_4249"/>
<dbReference type="GeneID" id="57477317"/>
<dbReference type="KEGG" id="pfl:PFL_4249"/>
<dbReference type="PATRIC" id="fig|220664.5.peg.4348"/>
<dbReference type="eggNOG" id="COG0500">
    <property type="taxonomic scope" value="Bacteria"/>
</dbReference>
<dbReference type="HOGENOM" id="CLU_085515_1_0_6"/>
<dbReference type="Proteomes" id="UP000008540">
    <property type="component" value="Chromosome"/>
</dbReference>
<dbReference type="GO" id="GO:0005737">
    <property type="term" value="C:cytoplasm"/>
    <property type="evidence" value="ECO:0007669"/>
    <property type="project" value="UniProtKB-SubCell"/>
</dbReference>
<dbReference type="GO" id="GO:0008119">
    <property type="term" value="F:thiopurine S-methyltransferase activity"/>
    <property type="evidence" value="ECO:0007669"/>
    <property type="project" value="UniProtKB-UniRule"/>
</dbReference>
<dbReference type="GO" id="GO:0032259">
    <property type="term" value="P:methylation"/>
    <property type="evidence" value="ECO:0007669"/>
    <property type="project" value="UniProtKB-KW"/>
</dbReference>
<dbReference type="GO" id="GO:0010038">
    <property type="term" value="P:response to metal ion"/>
    <property type="evidence" value="ECO:0007669"/>
    <property type="project" value="InterPro"/>
</dbReference>
<dbReference type="FunFam" id="3.40.50.150:FF:000101">
    <property type="entry name" value="Thiopurine S-methyltransferase"/>
    <property type="match status" value="1"/>
</dbReference>
<dbReference type="Gene3D" id="3.40.50.150">
    <property type="entry name" value="Vaccinia Virus protein VP39"/>
    <property type="match status" value="1"/>
</dbReference>
<dbReference type="HAMAP" id="MF_00812">
    <property type="entry name" value="Thiopur_methtran"/>
    <property type="match status" value="1"/>
</dbReference>
<dbReference type="InterPro" id="IPR029063">
    <property type="entry name" value="SAM-dependent_MTases_sf"/>
</dbReference>
<dbReference type="InterPro" id="IPR022474">
    <property type="entry name" value="Thiopur_S-MeTfrase_Se/Te_detox"/>
</dbReference>
<dbReference type="InterPro" id="IPR025835">
    <property type="entry name" value="Thiopurine_S-MeTrfase"/>
</dbReference>
<dbReference type="InterPro" id="IPR008854">
    <property type="entry name" value="TPMT"/>
</dbReference>
<dbReference type="NCBIfam" id="NF009732">
    <property type="entry name" value="PRK13255.1"/>
    <property type="match status" value="1"/>
</dbReference>
<dbReference type="NCBIfam" id="TIGR03840">
    <property type="entry name" value="TMPT_Se_Te"/>
    <property type="match status" value="1"/>
</dbReference>
<dbReference type="PANTHER" id="PTHR10259">
    <property type="entry name" value="THIOPURINE S-METHYLTRANSFERASE"/>
    <property type="match status" value="1"/>
</dbReference>
<dbReference type="PANTHER" id="PTHR10259:SF11">
    <property type="entry name" value="THIOPURINE S-METHYLTRANSFERASE"/>
    <property type="match status" value="1"/>
</dbReference>
<dbReference type="Pfam" id="PF05724">
    <property type="entry name" value="TPMT"/>
    <property type="match status" value="1"/>
</dbReference>
<dbReference type="PIRSF" id="PIRSF023956">
    <property type="entry name" value="Thiopurine_S-methyltransferase"/>
    <property type="match status" value="1"/>
</dbReference>
<dbReference type="SUPFAM" id="SSF53335">
    <property type="entry name" value="S-adenosyl-L-methionine-dependent methyltransferases"/>
    <property type="match status" value="1"/>
</dbReference>
<dbReference type="PROSITE" id="PS51585">
    <property type="entry name" value="SAM_MT_TPMT"/>
    <property type="match status" value="1"/>
</dbReference>
<name>TPMT_PSEF5</name>
<gene>
    <name evidence="1" type="primary">tpm</name>
    <name type="ordered locus">PFL_4249</name>
</gene>
<evidence type="ECO:0000255" key="1">
    <source>
        <dbReference type="HAMAP-Rule" id="MF_00812"/>
    </source>
</evidence>
<comment type="catalytic activity">
    <reaction evidence="1">
        <text>S-adenosyl-L-methionine + a thiopurine = S-adenosyl-L-homocysteine + a thiopurine S-methylether.</text>
        <dbReference type="EC" id="2.1.1.67"/>
    </reaction>
</comment>
<comment type="subcellular location">
    <subcellularLocation>
        <location evidence="1">Cytoplasm</location>
    </subcellularLocation>
</comment>
<comment type="similarity">
    <text evidence="1">Belongs to the class I-like SAM-binding methyltransferase superfamily. TPMT family.</text>
</comment>
<feature type="chain" id="PRO_0000220127" description="Thiopurine S-methyltransferase">
    <location>
        <begin position="1"/>
        <end position="222"/>
    </location>
</feature>
<feature type="binding site" evidence="1">
    <location>
        <position position="10"/>
    </location>
    <ligand>
        <name>S-adenosyl-L-methionine</name>
        <dbReference type="ChEBI" id="CHEBI:59789"/>
    </ligand>
</feature>
<feature type="binding site" evidence="1">
    <location>
        <position position="45"/>
    </location>
    <ligand>
        <name>S-adenosyl-L-methionine</name>
        <dbReference type="ChEBI" id="CHEBI:59789"/>
    </ligand>
</feature>
<feature type="binding site" evidence="1">
    <location>
        <position position="66"/>
    </location>
    <ligand>
        <name>S-adenosyl-L-methionine</name>
        <dbReference type="ChEBI" id="CHEBI:59789"/>
    </ligand>
</feature>
<feature type="binding site" evidence="1">
    <location>
        <position position="123"/>
    </location>
    <ligand>
        <name>S-adenosyl-L-methionine</name>
        <dbReference type="ChEBI" id="CHEBI:59789"/>
    </ligand>
</feature>
<sequence>MQADFWQKRWERDQIGFHLAEVNPYLQQYWPALGLAAQSRVLVPLCGKSLDLIWLADQGFEVLGIELAEKAVEDFFREHQLQPQISQHGVFKVYAHGPIELWCGDFFALTAEDTADCTALYDRAAMIALPSPMRQRYAAHLNGLLPNGSKGLLITMDYAQEQLDGPPFAVLDDEVRQRLGGVWQLQVETERDILGESWKFLQGGVTRLVERVYRLSKQGAAR</sequence>
<keyword id="KW-0963">Cytoplasm</keyword>
<keyword id="KW-0489">Methyltransferase</keyword>
<keyword id="KW-0949">S-adenosyl-L-methionine</keyword>
<keyword id="KW-0808">Transferase</keyword>